<comment type="function">
    <text evidence="1">Involved in the maturation of [NiFe] hydrogenases. Required for nickel insertion into the metal center of the hydrogenase.</text>
</comment>
<comment type="similarity">
    <text evidence="1">Belongs to the HypA/HybF family.</text>
</comment>
<feature type="chain" id="PRO_1000023852" description="Hydrogenase maturation factor HypA">
    <location>
        <begin position="1"/>
        <end position="113"/>
    </location>
</feature>
<feature type="binding site" evidence="1">
    <location>
        <position position="2"/>
    </location>
    <ligand>
        <name>Ni(2+)</name>
        <dbReference type="ChEBI" id="CHEBI:49786"/>
    </ligand>
</feature>
<feature type="binding site" evidence="1">
    <location>
        <position position="73"/>
    </location>
    <ligand>
        <name>Zn(2+)</name>
        <dbReference type="ChEBI" id="CHEBI:29105"/>
    </ligand>
</feature>
<feature type="binding site" evidence="1">
    <location>
        <position position="76"/>
    </location>
    <ligand>
        <name>Zn(2+)</name>
        <dbReference type="ChEBI" id="CHEBI:29105"/>
    </ligand>
</feature>
<feature type="binding site" evidence="1">
    <location>
        <position position="89"/>
    </location>
    <ligand>
        <name>Zn(2+)</name>
        <dbReference type="ChEBI" id="CHEBI:29105"/>
    </ligand>
</feature>
<feature type="binding site" evidence="1">
    <location>
        <position position="92"/>
    </location>
    <ligand>
        <name>Zn(2+)</name>
        <dbReference type="ChEBI" id="CHEBI:29105"/>
    </ligand>
</feature>
<accession>Q07S91</accession>
<proteinExistence type="inferred from homology"/>
<gene>
    <name evidence="1" type="primary">hypA</name>
    <name type="ordered locus">RPE_1241</name>
</gene>
<dbReference type="EMBL" id="CP000463">
    <property type="protein sequence ID" value="ABJ05193.1"/>
    <property type="molecule type" value="Genomic_DNA"/>
</dbReference>
<dbReference type="SMR" id="Q07S91"/>
<dbReference type="STRING" id="316055.RPE_1241"/>
<dbReference type="KEGG" id="rpe:RPE_1241"/>
<dbReference type="eggNOG" id="COG0375">
    <property type="taxonomic scope" value="Bacteria"/>
</dbReference>
<dbReference type="HOGENOM" id="CLU_126929_0_0_5"/>
<dbReference type="OrthoDB" id="288014at2"/>
<dbReference type="GO" id="GO:0016151">
    <property type="term" value="F:nickel cation binding"/>
    <property type="evidence" value="ECO:0007669"/>
    <property type="project" value="UniProtKB-UniRule"/>
</dbReference>
<dbReference type="GO" id="GO:0008270">
    <property type="term" value="F:zinc ion binding"/>
    <property type="evidence" value="ECO:0007669"/>
    <property type="project" value="UniProtKB-UniRule"/>
</dbReference>
<dbReference type="GO" id="GO:0051604">
    <property type="term" value="P:protein maturation"/>
    <property type="evidence" value="ECO:0007669"/>
    <property type="project" value="InterPro"/>
</dbReference>
<dbReference type="GO" id="GO:0036211">
    <property type="term" value="P:protein modification process"/>
    <property type="evidence" value="ECO:0007669"/>
    <property type="project" value="UniProtKB-UniRule"/>
</dbReference>
<dbReference type="FunFam" id="3.30.2320.80:FF:000001">
    <property type="entry name" value="Hydrogenase maturation factor HypA"/>
    <property type="match status" value="1"/>
</dbReference>
<dbReference type="Gene3D" id="3.30.2320.80">
    <property type="match status" value="1"/>
</dbReference>
<dbReference type="HAMAP" id="MF_00213">
    <property type="entry name" value="HypA_HybF"/>
    <property type="match status" value="1"/>
</dbReference>
<dbReference type="InterPro" id="IPR020538">
    <property type="entry name" value="Hydgase_Ni_incorp_HypA/HybF_CS"/>
</dbReference>
<dbReference type="InterPro" id="IPR000688">
    <property type="entry name" value="HypA/HybF"/>
</dbReference>
<dbReference type="NCBIfam" id="TIGR00100">
    <property type="entry name" value="hypA"/>
    <property type="match status" value="1"/>
</dbReference>
<dbReference type="NCBIfam" id="NF009046">
    <property type="entry name" value="PRK12380.1"/>
    <property type="match status" value="1"/>
</dbReference>
<dbReference type="PANTHER" id="PTHR34535">
    <property type="entry name" value="HYDROGENASE MATURATION FACTOR HYPA"/>
    <property type="match status" value="1"/>
</dbReference>
<dbReference type="PANTHER" id="PTHR34535:SF3">
    <property type="entry name" value="HYDROGENASE MATURATION FACTOR HYPA"/>
    <property type="match status" value="1"/>
</dbReference>
<dbReference type="Pfam" id="PF01155">
    <property type="entry name" value="HypA"/>
    <property type="match status" value="1"/>
</dbReference>
<dbReference type="PIRSF" id="PIRSF004761">
    <property type="entry name" value="Hydrgn_mat_HypA"/>
    <property type="match status" value="1"/>
</dbReference>
<dbReference type="PROSITE" id="PS01249">
    <property type="entry name" value="HYPA"/>
    <property type="match status" value="1"/>
</dbReference>
<organism>
    <name type="scientific">Rhodopseudomonas palustris (strain BisA53)</name>
    <dbReference type="NCBI Taxonomy" id="316055"/>
    <lineage>
        <taxon>Bacteria</taxon>
        <taxon>Pseudomonadati</taxon>
        <taxon>Pseudomonadota</taxon>
        <taxon>Alphaproteobacteria</taxon>
        <taxon>Hyphomicrobiales</taxon>
        <taxon>Nitrobacteraceae</taxon>
        <taxon>Rhodopseudomonas</taxon>
    </lineage>
</organism>
<sequence>MHEMSLCEGVIEIIEREAQQQNFAKVRTVWLEIGALSHVEPEAMRFCFSAVSHDTIAADARFEIVSVPGAAWCMACAKTVPLKQRYEPCPDCGGHQLQVTAGDELRVKELEVD</sequence>
<evidence type="ECO:0000255" key="1">
    <source>
        <dbReference type="HAMAP-Rule" id="MF_00213"/>
    </source>
</evidence>
<protein>
    <recommendedName>
        <fullName evidence="1">Hydrogenase maturation factor HypA</fullName>
    </recommendedName>
</protein>
<keyword id="KW-0479">Metal-binding</keyword>
<keyword id="KW-0533">Nickel</keyword>
<keyword id="KW-0862">Zinc</keyword>
<name>HYPA_RHOP5</name>
<reference key="1">
    <citation type="submission" date="2006-09" db="EMBL/GenBank/DDBJ databases">
        <title>Complete sequence of Rhodopseudomonas palustris BisA53.</title>
        <authorList>
            <consortium name="US DOE Joint Genome Institute"/>
            <person name="Copeland A."/>
            <person name="Lucas S."/>
            <person name="Lapidus A."/>
            <person name="Barry K."/>
            <person name="Detter J.C."/>
            <person name="Glavina del Rio T."/>
            <person name="Hammon N."/>
            <person name="Israni S."/>
            <person name="Dalin E."/>
            <person name="Tice H."/>
            <person name="Pitluck S."/>
            <person name="Chain P."/>
            <person name="Malfatti S."/>
            <person name="Shin M."/>
            <person name="Vergez L."/>
            <person name="Schmutz J."/>
            <person name="Larimer F."/>
            <person name="Land M."/>
            <person name="Hauser L."/>
            <person name="Pelletier D.A."/>
            <person name="Kyrpides N."/>
            <person name="Kim E."/>
            <person name="Harwood C.S."/>
            <person name="Oda Y."/>
            <person name="Richardson P."/>
        </authorList>
    </citation>
    <scope>NUCLEOTIDE SEQUENCE [LARGE SCALE GENOMIC DNA]</scope>
    <source>
        <strain>BisA53</strain>
    </source>
</reference>